<comment type="function">
    <text evidence="3 6">Serine protease, part of the gene cluster that mediates the biosynthesis of the secondary metabolite victorin, the molecular basis for Victoria blight of oats (PubMed:32929037). Within the pathway, vicPa and vicPb are probably involved in the processing of the vicA1 and vicA2 precursors (Probable). The pathway starts with the processing of the precursor vicA1 by several endopeptidases including kexin proteases as well as the cluster-specific S28 family peptidases vicPa and vicPb to produce 7 identical copies of the hexapeptide Gly-Leu-Lys-Leu-Ala-Phe. After being excised from the precursor peptide, the core peptides are cyclized and modified post-translationally by enzymes encoded within the gene cluster. The ustYa family oxidase vicYb is required for the formation of the macrocycle in victorin and the copper amine oxidases (CAOs) vicK1 and vicK2 are responsible for converting victorin to the active form by oxidizing the N-terminal glycyl residue in the peptides to glyoxylate. Relaxed substrate specificity of enzymes in the victorin biosynthetic pathway results in a metabolic grid that produces a set of analogs including victorinines B, C, E or HV-toxin M (Probable).</text>
</comment>
<comment type="pathway">
    <text evidence="6">Mycotoxin biosynthesis.</text>
</comment>
<comment type="similarity">
    <text evidence="5">Belongs to the peptidase S28 family.</text>
</comment>
<dbReference type="EC" id="3.4.-.-" evidence="6"/>
<dbReference type="EMBL" id="KI968939">
    <property type="protein sequence ID" value="EUN20593.1"/>
    <property type="molecule type" value="Genomic_DNA"/>
</dbReference>
<dbReference type="RefSeq" id="XP_014550167.1">
    <property type="nucleotide sequence ID" value="XM_014694681.1"/>
</dbReference>
<dbReference type="SMR" id="W7DQR8"/>
<dbReference type="GeneID" id="26250888"/>
<dbReference type="HOGENOM" id="CLU_023630_1_0_1"/>
<dbReference type="OrthoDB" id="3461at28556"/>
<dbReference type="Proteomes" id="UP000054337">
    <property type="component" value="Unassembled WGS sequence"/>
</dbReference>
<dbReference type="GO" id="GO:0008239">
    <property type="term" value="F:dipeptidyl-peptidase activity"/>
    <property type="evidence" value="ECO:0007669"/>
    <property type="project" value="TreeGrafter"/>
</dbReference>
<dbReference type="GO" id="GO:0070008">
    <property type="term" value="F:serine-type exopeptidase activity"/>
    <property type="evidence" value="ECO:0007669"/>
    <property type="project" value="InterPro"/>
</dbReference>
<dbReference type="GO" id="GO:0006508">
    <property type="term" value="P:proteolysis"/>
    <property type="evidence" value="ECO:0007669"/>
    <property type="project" value="UniProtKB-KW"/>
</dbReference>
<dbReference type="Gene3D" id="3.40.50.1820">
    <property type="entry name" value="alpha/beta hydrolase"/>
    <property type="match status" value="2"/>
</dbReference>
<dbReference type="InterPro" id="IPR029058">
    <property type="entry name" value="AB_hydrolase_fold"/>
</dbReference>
<dbReference type="InterPro" id="IPR008758">
    <property type="entry name" value="Peptidase_S28"/>
</dbReference>
<dbReference type="PANTHER" id="PTHR11010">
    <property type="entry name" value="PROTEASE S28 PRO-X CARBOXYPEPTIDASE-RELATED"/>
    <property type="match status" value="1"/>
</dbReference>
<dbReference type="PANTHER" id="PTHR11010:SF23">
    <property type="entry name" value="SERINE PEPTIDASE"/>
    <property type="match status" value="1"/>
</dbReference>
<dbReference type="Pfam" id="PF05577">
    <property type="entry name" value="Peptidase_S28"/>
    <property type="match status" value="1"/>
</dbReference>
<dbReference type="SUPFAM" id="SSF53474">
    <property type="entry name" value="alpha/beta-Hydrolases"/>
    <property type="match status" value="1"/>
</dbReference>
<reference key="1">
    <citation type="journal article" date="2013" name="PLoS Genet.">
        <title>Comparative genome structure, secondary metabolite, and effector coding capacity across Cochliobolus pathogens.</title>
        <authorList>
            <person name="Condon B.J."/>
            <person name="Leng Y."/>
            <person name="Wu D."/>
            <person name="Bushley K.E."/>
            <person name="Ohm R.A."/>
            <person name="Otillar R."/>
            <person name="Martin J."/>
            <person name="Schackwitz W."/>
            <person name="Grimwood J."/>
            <person name="MohdZainudin N."/>
            <person name="Xue C."/>
            <person name="Wang R."/>
            <person name="Manning V.A."/>
            <person name="Dhillon B."/>
            <person name="Tu Z.J."/>
            <person name="Steffenson B.J."/>
            <person name="Salamov A."/>
            <person name="Sun H."/>
            <person name="Lowry S."/>
            <person name="LaButti K."/>
            <person name="Han J."/>
            <person name="Copeland A."/>
            <person name="Lindquist E."/>
            <person name="Barry K."/>
            <person name="Schmutz J."/>
            <person name="Baker S.E."/>
            <person name="Ciuffetti L.M."/>
            <person name="Grigoriev I.V."/>
            <person name="Zhong S."/>
            <person name="Turgeon B.G."/>
        </authorList>
    </citation>
    <scope>NUCLEOTIDE SEQUENCE [LARGE SCALE GENOMIC DNA]</scope>
    <source>
        <strain>FI3</strain>
    </source>
</reference>
<reference key="2">
    <citation type="journal article" date="2020" name="Proc. Natl. Acad. Sci. U.S.A.">
        <title>Victorin, the host-selective cyclic peptide toxin from the oat pathogen Cochliobolus victoriae, is ribosomally encoded.</title>
        <authorList>
            <person name="Kessler S.C."/>
            <person name="Zhang X."/>
            <person name="McDonald M.C."/>
            <person name="Gilchrist C.L.M."/>
            <person name="Lin Z."/>
            <person name="Rightmyer A."/>
            <person name="Solomon P.S."/>
            <person name="Turgeon B.G."/>
            <person name="Chooi Y.H."/>
        </authorList>
    </citation>
    <scope>FUNCTION</scope>
</reference>
<proteinExistence type="inferred from homology"/>
<sequence>MLCYLLIHILCLQAVLGVPYDVLPLRIPALVPKDTSLLSGRGAFQQLIDHTNLDVGTFSQSYWFNTTYWGGPGSPIIFYTPGQHAATDRLHYLTDTTLPGLVAKEVRGAVVLVEHRYFGESQPFSNLSTANLQYLTLDQVLADFVHFARTVDLPFDLSGQSHPSRAPWIWIGNSYSAALVAWTEKLIPNVFWAYYASGAMVNCMQDFWQFNYPTQQGMPQDCRYSLEAIISHVDSVFLSGSPEQKHRLKTRFGLQDLDRLDDTASALSRPVIAWTLIQPSDTHAQFFEMCDAIGNLNSSWSRGHKVGSEINLQKALGNYANWFTTSYLPGLCESSGYSDWAGRNNVQCLDTANPSWQAFHDLAVQNEDRVWDWMICNFFLLWQTGAPVSRPTIFSRLVDSMYYKRRCKLIFPEEENVTYAARVTDDSINTLTGGWNHTGKRILFTNGEFDPWRSASVSSVFRPDGPMQSTSQQPIILIKGVQHQADMYVRNRINKDVREAMDTGIAQISRWVLDFHVEKSKTLTQYTSQVYCAH</sequence>
<feature type="signal peptide" evidence="1">
    <location>
        <begin position="1"/>
        <end position="17"/>
    </location>
</feature>
<feature type="chain" id="PRO_5004891025" description="Serine protease vicPa">
    <location>
        <begin position="18"/>
        <end position="534"/>
    </location>
</feature>
<feature type="active site" description="Charge relay system" evidence="1">
    <location>
        <position position="174"/>
    </location>
</feature>
<feature type="active site" description="Charge relay system" evidence="1">
    <location>
        <position position="450"/>
    </location>
</feature>
<feature type="glycosylation site" description="N-linked (GlcNAc...) asparagine" evidence="2">
    <location>
        <position position="65"/>
    </location>
</feature>
<feature type="glycosylation site" description="N-linked (GlcNAc...) asparagine" evidence="2">
    <location>
        <position position="126"/>
    </location>
</feature>
<feature type="glycosylation site" description="N-linked (GlcNAc...) asparagine" evidence="2">
    <location>
        <position position="297"/>
    </location>
</feature>
<feature type="glycosylation site" description="N-linked (GlcNAc...) asparagine" evidence="2">
    <location>
        <position position="416"/>
    </location>
</feature>
<feature type="glycosylation site" description="N-linked (GlcNAc...) asparagine" evidence="2">
    <location>
        <position position="436"/>
    </location>
</feature>
<organism>
    <name type="scientific">Bipolaris victoriae (strain FI3)</name>
    <name type="common">Victoria blight of oats agent</name>
    <name type="synonym">Cochliobolus victoriae</name>
    <dbReference type="NCBI Taxonomy" id="930091"/>
    <lineage>
        <taxon>Eukaryota</taxon>
        <taxon>Fungi</taxon>
        <taxon>Dikarya</taxon>
        <taxon>Ascomycota</taxon>
        <taxon>Pezizomycotina</taxon>
        <taxon>Dothideomycetes</taxon>
        <taxon>Pleosporomycetidae</taxon>
        <taxon>Pleosporales</taxon>
        <taxon>Pleosporineae</taxon>
        <taxon>Pleosporaceae</taxon>
        <taxon>Bipolaris</taxon>
    </lineage>
</organism>
<evidence type="ECO:0000255" key="1"/>
<evidence type="ECO:0000255" key="2">
    <source>
        <dbReference type="PROSITE-ProRule" id="PRU00498"/>
    </source>
</evidence>
<evidence type="ECO:0000269" key="3">
    <source>
    </source>
</evidence>
<evidence type="ECO:0000303" key="4">
    <source>
    </source>
</evidence>
<evidence type="ECO:0000305" key="5"/>
<evidence type="ECO:0000305" key="6">
    <source>
    </source>
</evidence>
<keyword id="KW-0325">Glycoprotein</keyword>
<keyword id="KW-0378">Hydrolase</keyword>
<keyword id="KW-0645">Protease</keyword>
<keyword id="KW-0720">Serine protease</keyword>
<keyword id="KW-0732">Signal</keyword>
<keyword id="KW-0843">Virulence</keyword>
<accession>W7DQR8</accession>
<protein>
    <recommendedName>
        <fullName evidence="4">Serine protease vicPa</fullName>
        <ecNumber evidence="6">3.4.-.-</ecNumber>
    </recommendedName>
    <alternativeName>
        <fullName evidence="4">Victorin biosynthesis cluster protein Pa</fullName>
    </alternativeName>
</protein>
<name>VICPA_BIPV3</name>
<gene>
    <name evidence="4" type="primary">vicPa</name>
    <name type="ORF">COCVIDRAFT_116260</name>
</gene>